<organism>
    <name type="scientific">Caenorhabditis elegans</name>
    <dbReference type="NCBI Taxonomy" id="6239"/>
    <lineage>
        <taxon>Eukaryota</taxon>
        <taxon>Metazoa</taxon>
        <taxon>Ecdysozoa</taxon>
        <taxon>Nematoda</taxon>
        <taxon>Chromadorea</taxon>
        <taxon>Rhabditida</taxon>
        <taxon>Rhabditina</taxon>
        <taxon>Rhabditomorpha</taxon>
        <taxon>Rhabditoidea</taxon>
        <taxon>Rhabditidae</taxon>
        <taxon>Peloderinae</taxon>
        <taxon>Caenorhabditis</taxon>
    </lineage>
</organism>
<keyword id="KW-0025">Alternative splicing</keyword>
<keyword id="KW-0067">ATP-binding</keyword>
<keyword id="KW-0418">Kinase</keyword>
<keyword id="KW-0547">Nucleotide-binding</keyword>
<keyword id="KW-1185">Reference proteome</keyword>
<keyword id="KW-0723">Serine/threonine-protein kinase</keyword>
<keyword id="KW-0807">Transducer</keyword>
<keyword id="KW-0808">Transferase</keyword>
<dbReference type="EC" id="2.7.11.1"/>
<dbReference type="EMBL" id="AF087131">
    <property type="protein sequence ID" value="AAD14593.1"/>
    <property type="molecule type" value="mRNA"/>
</dbReference>
<dbReference type="EMBL" id="AF087132">
    <property type="protein sequence ID" value="AAD14594.1"/>
    <property type="molecule type" value="mRNA"/>
</dbReference>
<dbReference type="EMBL" id="AF087133">
    <property type="protein sequence ID" value="AAD14595.1"/>
    <property type="molecule type" value="mRNA"/>
</dbReference>
<dbReference type="EMBL" id="Z50029">
    <property type="protein sequence ID" value="CAB63416.1"/>
    <property type="molecule type" value="Genomic_DNA"/>
</dbReference>
<dbReference type="EMBL" id="Z50029">
    <property type="protein sequence ID" value="CAB63417.1"/>
    <property type="molecule type" value="Genomic_DNA"/>
</dbReference>
<dbReference type="EMBL" id="Z50029">
    <property type="protein sequence ID" value="CAC42384.1"/>
    <property type="molecule type" value="Genomic_DNA"/>
</dbReference>
<dbReference type="EMBL" id="Z50029">
    <property type="protein sequence ID" value="CAD57714.1"/>
    <property type="molecule type" value="Genomic_DNA"/>
</dbReference>
<dbReference type="PIR" id="T27622">
    <property type="entry name" value="T27622"/>
</dbReference>
<dbReference type="PIR" id="T43630">
    <property type="entry name" value="T43630"/>
</dbReference>
<dbReference type="PIR" id="T43632">
    <property type="entry name" value="T43632"/>
</dbReference>
<dbReference type="RefSeq" id="NP_001024971.1">
    <molecule id="Q23356-2"/>
    <property type="nucleotide sequence ID" value="NM_001029800.3"/>
</dbReference>
<dbReference type="RefSeq" id="NP_001024972.1">
    <molecule id="Q23356-3"/>
    <property type="nucleotide sequence ID" value="NM_001029801.5"/>
</dbReference>
<dbReference type="RefSeq" id="NP_001024973.1">
    <molecule id="Q23356-1"/>
    <property type="nucleotide sequence ID" value="NM_001029802.5"/>
</dbReference>
<dbReference type="RefSeq" id="NP_001024974.1">
    <molecule id="Q23356-4"/>
    <property type="nucleotide sequence ID" value="NM_001029803.6"/>
</dbReference>
<dbReference type="SMR" id="Q23356"/>
<dbReference type="BioGRID" id="46161">
    <property type="interactions" value="25"/>
</dbReference>
<dbReference type="DIP" id="DIP-25874N"/>
<dbReference type="FunCoup" id="Q23356">
    <property type="interactions" value="1892"/>
</dbReference>
<dbReference type="IntAct" id="Q23356">
    <property type="interactions" value="7"/>
</dbReference>
<dbReference type="STRING" id="6239.ZC504.4c.1"/>
<dbReference type="PaxDb" id="6239-ZC504.4c"/>
<dbReference type="PeptideAtlas" id="Q23356"/>
<dbReference type="EnsemblMetazoa" id="ZC504.4a.1">
    <molecule id="Q23356-2"/>
    <property type="protein sequence ID" value="ZC504.4a.1"/>
    <property type="gene ID" value="WBGene00003247"/>
</dbReference>
<dbReference type="EnsemblMetazoa" id="ZC504.4b.1">
    <molecule id="Q23356-3"/>
    <property type="protein sequence ID" value="ZC504.4b.1"/>
    <property type="gene ID" value="WBGene00003247"/>
</dbReference>
<dbReference type="EnsemblMetazoa" id="ZC504.4c.1">
    <molecule id="Q23356-1"/>
    <property type="protein sequence ID" value="ZC504.4c.1"/>
    <property type="gene ID" value="WBGene00003247"/>
</dbReference>
<dbReference type="EnsemblMetazoa" id="ZC504.4d.1">
    <molecule id="Q23356-4"/>
    <property type="protein sequence ID" value="ZC504.4d.1"/>
    <property type="gene ID" value="WBGene00003247"/>
</dbReference>
<dbReference type="GeneID" id="181248"/>
<dbReference type="KEGG" id="cel:CELE_ZC504.4"/>
<dbReference type="UCSC" id="ZC504.4c">
    <molecule id="Q23356-1"/>
    <property type="organism name" value="c. elegans"/>
</dbReference>
<dbReference type="AGR" id="WB:WBGene00003247"/>
<dbReference type="CTD" id="181248"/>
<dbReference type="WormBase" id="ZC504.4a">
    <molecule id="Q23356-2"/>
    <property type="protein sequence ID" value="CE25672"/>
    <property type="gene ID" value="WBGene00003247"/>
    <property type="gene designation" value="mig-15"/>
</dbReference>
<dbReference type="WormBase" id="ZC504.4b">
    <molecule id="Q23356-3"/>
    <property type="protein sequence ID" value="CE25673"/>
    <property type="gene ID" value="WBGene00003247"/>
    <property type="gene designation" value="mig-15"/>
</dbReference>
<dbReference type="WormBase" id="ZC504.4c">
    <molecule id="Q23356-1"/>
    <property type="protein sequence ID" value="CE28273"/>
    <property type="gene ID" value="WBGene00003247"/>
    <property type="gene designation" value="mig-15"/>
</dbReference>
<dbReference type="WormBase" id="ZC504.4d">
    <molecule id="Q23356-4"/>
    <property type="protein sequence ID" value="CE32767"/>
    <property type="gene ID" value="WBGene00003247"/>
    <property type="gene designation" value="mig-15"/>
</dbReference>
<dbReference type="eggNOG" id="KOG0587">
    <property type="taxonomic scope" value="Eukaryota"/>
</dbReference>
<dbReference type="GeneTree" id="ENSGT00950000183196"/>
<dbReference type="InParanoid" id="Q23356"/>
<dbReference type="OMA" id="LEKRNGW"/>
<dbReference type="OrthoDB" id="8957712at2759"/>
<dbReference type="PhylomeDB" id="Q23356"/>
<dbReference type="Reactome" id="R-CEL-2559580">
    <property type="pathway name" value="Oxidative Stress Induced Senescence"/>
</dbReference>
<dbReference type="SignaLink" id="Q23356"/>
<dbReference type="PRO" id="PR:Q23356"/>
<dbReference type="Proteomes" id="UP000001940">
    <property type="component" value="Chromosome X"/>
</dbReference>
<dbReference type="Bgee" id="WBGene00003247">
    <property type="expression patterns" value="Expressed in pharyngeal muscle cell (C elegans) and 4 other cell types or tissues"/>
</dbReference>
<dbReference type="GO" id="GO:0005737">
    <property type="term" value="C:cytoplasm"/>
    <property type="evidence" value="ECO:0000318"/>
    <property type="project" value="GO_Central"/>
</dbReference>
<dbReference type="GO" id="GO:0005524">
    <property type="term" value="F:ATP binding"/>
    <property type="evidence" value="ECO:0007669"/>
    <property type="project" value="UniProtKB-KW"/>
</dbReference>
<dbReference type="GO" id="GO:0106310">
    <property type="term" value="F:protein serine kinase activity"/>
    <property type="evidence" value="ECO:0007669"/>
    <property type="project" value="RHEA"/>
</dbReference>
<dbReference type="GO" id="GO:0004674">
    <property type="term" value="F:protein serine/threonine kinase activity"/>
    <property type="evidence" value="ECO:0000318"/>
    <property type="project" value="GO_Central"/>
</dbReference>
<dbReference type="GO" id="GO:0010171">
    <property type="term" value="P:body morphogenesis"/>
    <property type="evidence" value="ECO:0000316"/>
    <property type="project" value="WormBase"/>
</dbReference>
<dbReference type="GO" id="GO:0033563">
    <property type="term" value="P:dorsal/ventral axon guidance"/>
    <property type="evidence" value="ECO:0000315"/>
    <property type="project" value="WormBase"/>
</dbReference>
<dbReference type="GO" id="GO:0000165">
    <property type="term" value="P:MAPK cascade"/>
    <property type="evidence" value="ECO:0000318"/>
    <property type="project" value="GO_Central"/>
</dbReference>
<dbReference type="GO" id="GO:0002119">
    <property type="term" value="P:nematode larval development"/>
    <property type="evidence" value="ECO:0000315"/>
    <property type="project" value="WormBase"/>
</dbReference>
<dbReference type="GO" id="GO:0048812">
    <property type="term" value="P:neuron projection morphogenesis"/>
    <property type="evidence" value="ECO:0000315"/>
    <property type="project" value="WormBase"/>
</dbReference>
<dbReference type="GO" id="GO:0030334">
    <property type="term" value="P:regulation of cell migration"/>
    <property type="evidence" value="ECO:0000315"/>
    <property type="project" value="WormBase"/>
</dbReference>
<dbReference type="GO" id="GO:0043408">
    <property type="term" value="P:regulation of MAPK cascade"/>
    <property type="evidence" value="ECO:0000318"/>
    <property type="project" value="GO_Central"/>
</dbReference>
<dbReference type="GO" id="GO:0032228">
    <property type="term" value="P:regulation of synaptic transmission, GABAergic"/>
    <property type="evidence" value="ECO:0000315"/>
    <property type="project" value="UniProtKB"/>
</dbReference>
<dbReference type="GO" id="GO:0022414">
    <property type="term" value="P:reproductive process"/>
    <property type="evidence" value="ECO:0000315"/>
    <property type="project" value="WormBase"/>
</dbReference>
<dbReference type="CDD" id="cd06608">
    <property type="entry name" value="STKc_myosinIII_N_like"/>
    <property type="match status" value="1"/>
</dbReference>
<dbReference type="FunFam" id="1.10.510.10:FF:000003">
    <property type="entry name" value="TRAF2 and NCK-interacting protein kinase isoform 4"/>
    <property type="match status" value="1"/>
</dbReference>
<dbReference type="FunFam" id="3.30.200.20:FF:000006">
    <property type="entry name" value="TRAF2 and NCK-interacting protein kinase isoform 4"/>
    <property type="match status" value="1"/>
</dbReference>
<dbReference type="Gene3D" id="3.30.200.20">
    <property type="entry name" value="Phosphorylase Kinase, domain 1"/>
    <property type="match status" value="1"/>
</dbReference>
<dbReference type="Gene3D" id="1.10.510.10">
    <property type="entry name" value="Transferase(Phosphotransferase) domain 1"/>
    <property type="match status" value="1"/>
</dbReference>
<dbReference type="InterPro" id="IPR001180">
    <property type="entry name" value="CNH_dom"/>
</dbReference>
<dbReference type="InterPro" id="IPR011009">
    <property type="entry name" value="Kinase-like_dom_sf"/>
</dbReference>
<dbReference type="InterPro" id="IPR000719">
    <property type="entry name" value="Prot_kinase_dom"/>
</dbReference>
<dbReference type="InterPro" id="IPR017441">
    <property type="entry name" value="Protein_kinase_ATP_BS"/>
</dbReference>
<dbReference type="InterPro" id="IPR008271">
    <property type="entry name" value="Ser/Thr_kinase_AS"/>
</dbReference>
<dbReference type="InterPro" id="IPR051700">
    <property type="entry name" value="STE20_Ser-Thr_kinase"/>
</dbReference>
<dbReference type="PANTHER" id="PTHR47096">
    <property type="entry name" value="MISSHAPEN LIKE KINASE 1"/>
    <property type="match status" value="1"/>
</dbReference>
<dbReference type="PANTHER" id="PTHR47096:SF1">
    <property type="entry name" value="MISSHAPEN LIKE KINASE 1"/>
    <property type="match status" value="1"/>
</dbReference>
<dbReference type="Pfam" id="PF00780">
    <property type="entry name" value="CNH"/>
    <property type="match status" value="1"/>
</dbReference>
<dbReference type="Pfam" id="PF00069">
    <property type="entry name" value="Pkinase"/>
    <property type="match status" value="1"/>
</dbReference>
<dbReference type="SMART" id="SM00036">
    <property type="entry name" value="CNH"/>
    <property type="match status" value="1"/>
</dbReference>
<dbReference type="SMART" id="SM00220">
    <property type="entry name" value="S_TKc"/>
    <property type="match status" value="1"/>
</dbReference>
<dbReference type="SUPFAM" id="SSF56112">
    <property type="entry name" value="Protein kinase-like (PK-like)"/>
    <property type="match status" value="1"/>
</dbReference>
<dbReference type="PROSITE" id="PS50219">
    <property type="entry name" value="CNH"/>
    <property type="match status" value="1"/>
</dbReference>
<dbReference type="PROSITE" id="PS00107">
    <property type="entry name" value="PROTEIN_KINASE_ATP"/>
    <property type="match status" value="1"/>
</dbReference>
<dbReference type="PROSITE" id="PS50011">
    <property type="entry name" value="PROTEIN_KINASE_DOM"/>
    <property type="match status" value="1"/>
</dbReference>
<dbReference type="PROSITE" id="PS00108">
    <property type="entry name" value="PROTEIN_KINASE_ST"/>
    <property type="match status" value="1"/>
</dbReference>
<name>MIG15_CAEEL</name>
<feature type="chain" id="PRO_0000086326" description="Serine/threonine-protein kinase mig-15">
    <location>
        <begin position="1"/>
        <end position="1096"/>
    </location>
</feature>
<feature type="domain" description="Protein kinase" evidence="1">
    <location>
        <begin position="21"/>
        <end position="288"/>
    </location>
</feature>
<feature type="domain" description="CNH" evidence="2">
    <location>
        <begin position="778"/>
        <end position="1070"/>
    </location>
</feature>
<feature type="region of interest" description="Disordered" evidence="4">
    <location>
        <begin position="293"/>
        <end position="351"/>
    </location>
</feature>
<feature type="region of interest" description="Disordered" evidence="4">
    <location>
        <begin position="380"/>
        <end position="492"/>
    </location>
</feature>
<feature type="region of interest" description="Disordered" evidence="4">
    <location>
        <begin position="517"/>
        <end position="545"/>
    </location>
</feature>
<feature type="region of interest" description="Disordered" evidence="4">
    <location>
        <begin position="574"/>
        <end position="664"/>
    </location>
</feature>
<feature type="compositionally biased region" description="Basic and acidic residues" evidence="4">
    <location>
        <begin position="293"/>
        <end position="315"/>
    </location>
</feature>
<feature type="compositionally biased region" description="Acidic residues" evidence="4">
    <location>
        <begin position="316"/>
        <end position="328"/>
    </location>
</feature>
<feature type="compositionally biased region" description="Low complexity" evidence="4">
    <location>
        <begin position="380"/>
        <end position="393"/>
    </location>
</feature>
<feature type="compositionally biased region" description="Basic and acidic residues" evidence="4">
    <location>
        <begin position="397"/>
        <end position="408"/>
    </location>
</feature>
<feature type="compositionally biased region" description="Basic and acidic residues" evidence="4">
    <location>
        <begin position="453"/>
        <end position="472"/>
    </location>
</feature>
<feature type="compositionally biased region" description="Pro residues" evidence="4">
    <location>
        <begin position="532"/>
        <end position="541"/>
    </location>
</feature>
<feature type="compositionally biased region" description="Acidic residues" evidence="4">
    <location>
        <begin position="629"/>
        <end position="642"/>
    </location>
</feature>
<feature type="active site" description="Proton acceptor" evidence="1 3">
    <location>
        <position position="151"/>
    </location>
</feature>
<feature type="binding site" evidence="1">
    <location>
        <begin position="27"/>
        <end position="35"/>
    </location>
    <ligand>
        <name>ATP</name>
        <dbReference type="ChEBI" id="CHEBI:30616"/>
    </ligand>
</feature>
<feature type="binding site" evidence="1">
    <location>
        <position position="50"/>
    </location>
    <ligand>
        <name>ATP</name>
        <dbReference type="ChEBI" id="CHEBI:30616"/>
    </ligand>
</feature>
<feature type="splice variant" id="VSP_014010" description="In isoform d." evidence="8">
    <original>RKGFQKLQESSRGFAE</original>
    <variation>Q</variation>
    <location>
        <begin position="356"/>
        <end position="371"/>
    </location>
</feature>
<feature type="splice variant" id="VSP_014011" description="In isoform b." evidence="8">
    <location>
        <begin position="431"/>
        <end position="435"/>
    </location>
</feature>
<feature type="splice variant" id="VSP_014012" description="In isoform a, isoform b and isoform d." evidence="7">
    <location>
        <begin position="688"/>
        <end position="696"/>
    </location>
</feature>
<proteinExistence type="evidence at transcript level"/>
<accession>Q23356</accession>
<accession>Q8I4B5</accession>
<accession>Q8T8M3</accession>
<accession>Q95ZI7</accession>
<accession>Q9UAN7</accession>
<accession>Q9XYC3</accession>
<accession>Q9XYC4</accession>
<sequence length="1096" mass="122504">MSSSGLDEIDLNSLRDPAGIFELIEVVGNGTYGQVYKGRHVKTAQLAAIKIMNINEDEEDEIKLEINMLKKHSHHRNVATYYGAFIKKLPSSTGKHDQLWLVMEFCGSGSITDLVKNTKGGSLKEEWIAYICREILRGLYHLHQSKVIHRDIKGQNVLLTDSAEVKLVDFGVSAQLDKTVGRRNTFIGTPYWMAPEVIACDESPEATYDSRSDLWSLGITALEMAEGHPPLCDMHPMRALFLIPRNPPPKLKRNKKWTKKFETFIETVLVKDYHQRPYTGALLRHPFIKEQPHEQTIRHSIKEHIDRNRRVKKDDADYEYSGSEDDEPSPNNRGPSMGIRDDSESSSMIPMDNTLRKGFQKLQESSRGFAEPGAQQLRRLPQQPAPAPFQYQQSRYVEPRRESSEVKLRAVSSRGAADGPRHSPASRPRPVSHHQRSPQQSHPAAPHLADLANYEKRRRSEREERRERERQAHHAMPIARVSASVPAPQQSRKMSEPLLITHVKPEDLDVLASELSKMGGHHNGRSREESMSPPPPAPPPREASISSITDTIDVGELDNGADAEWDDLKDIMMNGEGTLRGPNKPLPPTPTDGENTLVSDVRRNGNGNSGHGAYKGKKIPEIRPGIISLDDDDSDSDNEEGNEPLMFKPINASSSRGALPDLLPKSPQLRRQINDQTRQMSDDRADESASLFGSFYQPNGFQNSDSRSSIQHSFSNRDREKSFVGYFGGGAGAGGGTVNRPGRPQDINQVQVNVTPNSNGTPAENDAPEIRKYKKKFSGEILCAALWGVNLLIGTDSGLMLLDRSGQGKVYPLISRRRFDQMTVLEGQNILATISGRKRRIRVYYLSWLRQKILRTEGAGSANTTEKRNGWVNVGDLQGAIHFKIVRYERIKFLVVGLESSIEIYAWAPKPYHKFMSFKSFGSLSHVPLIVDLTVEDNARLKVLYGSTGGFHAIDLDSAAVYDIYTPAQSGQTTTPHCIVVLPNSNGMQLLLCYDNEGVYVNTYGRMTKNVVLQWGEMPSSVAYISTGQIMGWGNKAIEIRSVDTGHLDGVFMHKKAQKLKFLCERNDKVFFSSAKGGGSCQIYFMTLNKPGLTNW</sequence>
<comment type="function">
    <text evidence="5 6">Involved in cell migration and signal transduction (PubMed:11967148, PubMed:22732572). Important in several developmental processes including epidermal development, Q neuroblast migrations and muscle arm targeting. Required with ina-1/pat-3 to stabilize the commissural axons growth cone along a precise direction and are required for the cell to respond appropriately when signaling in the growth cone must change (PubMed:11967148). During gonad morphogenesis, involved in distal tip cell (DTC) migration from the dorsal side of the hermaphrodite body to the midbody to allow for formation of gonad arms (PubMed:22732572).</text>
</comment>
<comment type="catalytic activity">
    <reaction>
        <text>L-seryl-[protein] + ATP = O-phospho-L-seryl-[protein] + ADP + H(+)</text>
        <dbReference type="Rhea" id="RHEA:17989"/>
        <dbReference type="Rhea" id="RHEA-COMP:9863"/>
        <dbReference type="Rhea" id="RHEA-COMP:11604"/>
        <dbReference type="ChEBI" id="CHEBI:15378"/>
        <dbReference type="ChEBI" id="CHEBI:29999"/>
        <dbReference type="ChEBI" id="CHEBI:30616"/>
        <dbReference type="ChEBI" id="CHEBI:83421"/>
        <dbReference type="ChEBI" id="CHEBI:456216"/>
        <dbReference type="EC" id="2.7.11.1"/>
    </reaction>
</comment>
<comment type="catalytic activity">
    <reaction>
        <text>L-threonyl-[protein] + ATP = O-phospho-L-threonyl-[protein] + ADP + H(+)</text>
        <dbReference type="Rhea" id="RHEA:46608"/>
        <dbReference type="Rhea" id="RHEA-COMP:11060"/>
        <dbReference type="Rhea" id="RHEA-COMP:11605"/>
        <dbReference type="ChEBI" id="CHEBI:15378"/>
        <dbReference type="ChEBI" id="CHEBI:30013"/>
        <dbReference type="ChEBI" id="CHEBI:30616"/>
        <dbReference type="ChEBI" id="CHEBI:61977"/>
        <dbReference type="ChEBI" id="CHEBI:456216"/>
        <dbReference type="EC" id="2.7.11.1"/>
    </reaction>
</comment>
<comment type="alternative products">
    <event type="alternative splicing"/>
    <isoform>
        <id>Q23356-1</id>
        <name>c</name>
        <sequence type="displayed"/>
    </isoform>
    <isoform>
        <id>Q23356-2</id>
        <name>a</name>
        <sequence type="described" ref="VSP_014012"/>
    </isoform>
    <isoform>
        <id>Q23356-3</id>
        <name>b</name>
        <sequence type="described" ref="VSP_014011 VSP_014012"/>
    </isoform>
    <isoform>
        <id>Q23356-4</id>
        <name>d</name>
        <sequence type="described" ref="VSP_014010 VSP_014012"/>
    </isoform>
</comment>
<comment type="disruption phenotype">
    <text evidence="5 6">Mutants exhibit premature branching of commissures (PubMed:11967148). RNAi-mediated knockdown results in gonad distal tip cell (DTC) migration defects whereby DTCs do not migrate to the midbody of the hermaphrodite and as a consequence this leads to abnormal gonadal arm formation during gonad morphogenesis (PubMed:22732572). Double knockdown with mig-38 results in enhanced gonad DTC migration defects (PubMed:22732572).</text>
</comment>
<comment type="similarity">
    <text evidence="8">Belongs to the protein kinase superfamily. STE Ser/Thr protein kinase family. STE20 subfamily.</text>
</comment>
<reference key="1">
    <citation type="submission" date="1998-08" db="EMBL/GenBank/DDBJ databases">
        <title>MIG-15, a NIK ortholog of the STE20 family of serine/threonine protein kinases, is involved in cell migration and signal transduction in C. elegans.</title>
        <authorList>
            <person name="Zhu X."/>
            <person name="Acharya P."/>
            <person name="Hedgecock E.M."/>
        </authorList>
    </citation>
    <scope>NUCLEOTIDE SEQUENCE [MRNA] (ISOFORM A)</scope>
    <scope>NUCLEOTIDE SEQUENCE [MRNA] OF 369-1096 (ISOFORM C)</scope>
    <source>
        <strain>Bristol N2</strain>
    </source>
</reference>
<reference key="2">
    <citation type="journal article" date="1998" name="Science">
        <title>Genome sequence of the nematode C. elegans: a platform for investigating biology.</title>
        <authorList>
            <consortium name="The C. elegans sequencing consortium"/>
        </authorList>
    </citation>
    <scope>NUCLEOTIDE SEQUENCE [LARGE SCALE GENOMIC DNA]</scope>
    <scope>ALTERNATIVE SPLICING</scope>
    <source>
        <strain>Bristol N2</strain>
    </source>
</reference>
<reference key="3">
    <citation type="online journal article" date="1997" name="Worm Breeder's Gazette">
        <title>mig-15 encodes a novel Ser/Thr protein kinase of the Ste-20/p65PAK family.</title>
        <authorList>
            <person name="Zhu X."/>
            <person name="Hedgecock E.M."/>
        </authorList>
        <locator>14(5):76</locator>
    </citation>
    <scope>IDENTIFICATION</scope>
</reference>
<reference key="4">
    <citation type="journal article" date="2002" name="Curr. Biol.">
        <title>A conserved interaction between beta1 integrin/PAT-3 and Nck-interacting kinase/MIG-15 that mediates commissural axon navigation in C. elegans.</title>
        <authorList>
            <person name="Poinat P."/>
            <person name="De Arcangelis A."/>
            <person name="Sookhareea S."/>
            <person name="Zhu X."/>
            <person name="Hedgecock E.M."/>
            <person name="Labouesse M."/>
            <person name="Georges-Labouesse E."/>
        </authorList>
    </citation>
    <scope>FUNCTION</scope>
    <scope>DISRUPTION PHENOTYPE</scope>
</reference>
<reference key="5">
    <citation type="journal article" date="2012" name="Dev. Biol.">
        <title>mig-38, a novel gene that regulates distal tip cell turning during gonadogenesis in C. elegans hermaphrodites.</title>
        <authorList>
            <person name="Martynovsky M."/>
            <person name="Wong M.C."/>
            <person name="Byrd D.T."/>
            <person name="Kimble J."/>
            <person name="Schwarzbauer J.E."/>
        </authorList>
    </citation>
    <scope>FUNCTION</scope>
    <scope>DISRUPTION PHENOTYPE</scope>
</reference>
<protein>
    <recommendedName>
        <fullName>Serine/threonine-protein kinase mig-15</fullName>
        <ecNumber>2.7.11.1</ecNumber>
    </recommendedName>
    <alternativeName>
        <fullName>Abnormal cell migration protein 15</fullName>
    </alternativeName>
</protein>
<gene>
    <name type="primary">mig-15</name>
    <name type="ORF">ZC504.4</name>
</gene>
<evidence type="ECO:0000255" key="1">
    <source>
        <dbReference type="PROSITE-ProRule" id="PRU00159"/>
    </source>
</evidence>
<evidence type="ECO:0000255" key="2">
    <source>
        <dbReference type="PROSITE-ProRule" id="PRU00795"/>
    </source>
</evidence>
<evidence type="ECO:0000255" key="3">
    <source>
        <dbReference type="PROSITE-ProRule" id="PRU10027"/>
    </source>
</evidence>
<evidence type="ECO:0000256" key="4">
    <source>
        <dbReference type="SAM" id="MobiDB-lite"/>
    </source>
</evidence>
<evidence type="ECO:0000269" key="5">
    <source>
    </source>
</evidence>
<evidence type="ECO:0000269" key="6">
    <source>
    </source>
</evidence>
<evidence type="ECO:0000303" key="7">
    <source ref="1"/>
</evidence>
<evidence type="ECO:0000305" key="8"/>